<name>CTAA_ERYLH</name>
<sequence length="337" mass="37202">MALARWLWVVAGLVVTIVAIGGITRLTESGLSITHWSVVSGILPPLSESAWQAEFDLYRQTGEYRLESGPAGMDLAAFKFIYFWEWFHRILGRVIGLAFLLPMMWFWIRGMIPAGYRGRLLALFALICGQGALGWYMVASGVGTDLTDVSHFRLSAHLLTALFLLAGLVWTALDLRRLARVPDARPARFTGVAWMASIILFIQILLGAWVAGLNAGHASYSWPMMNGGLLPQPDLTRGWLWALTHDPFLLHFLHRWWAWVAVIALVVLARKVRPFDRRASIAVHSAFGTMVVLGIATVLSEVSLWIAVAHQLTGALLVISTAWAAHAIGTARKTEAA</sequence>
<feature type="chain" id="PRO_0000349034" description="Heme A synthase">
    <location>
        <begin position="1"/>
        <end position="337"/>
    </location>
</feature>
<feature type="transmembrane region" description="Helical" evidence="1">
    <location>
        <begin position="3"/>
        <end position="23"/>
    </location>
</feature>
<feature type="transmembrane region" description="Helical" evidence="1">
    <location>
        <begin position="94"/>
        <end position="114"/>
    </location>
</feature>
<feature type="transmembrane region" description="Helical" evidence="1">
    <location>
        <begin position="120"/>
        <end position="140"/>
    </location>
</feature>
<feature type="transmembrane region" description="Helical" evidence="1">
    <location>
        <begin position="154"/>
        <end position="174"/>
    </location>
</feature>
<feature type="transmembrane region" description="Helical" evidence="1">
    <location>
        <begin position="191"/>
        <end position="211"/>
    </location>
</feature>
<feature type="transmembrane region" description="Helical" evidence="1">
    <location>
        <begin position="248"/>
        <end position="268"/>
    </location>
</feature>
<feature type="transmembrane region" description="Helical" evidence="1">
    <location>
        <begin position="289"/>
        <end position="309"/>
    </location>
</feature>
<feature type="transmembrane region" description="Helical" evidence="1">
    <location>
        <begin position="311"/>
        <end position="331"/>
    </location>
</feature>
<feature type="binding site" description="axial binding residue" evidence="1">
    <location>
        <position position="254"/>
    </location>
    <ligand>
        <name>heme</name>
        <dbReference type="ChEBI" id="CHEBI:30413"/>
    </ligand>
    <ligandPart>
        <name>Fe</name>
        <dbReference type="ChEBI" id="CHEBI:18248"/>
    </ligandPart>
</feature>
<feature type="binding site" description="axial binding residue" evidence="1">
    <location>
        <position position="310"/>
    </location>
    <ligand>
        <name>heme</name>
        <dbReference type="ChEBI" id="CHEBI:30413"/>
    </ligand>
    <ligandPart>
        <name>Fe</name>
        <dbReference type="ChEBI" id="CHEBI:18248"/>
    </ligandPart>
</feature>
<keyword id="KW-1003">Cell membrane</keyword>
<keyword id="KW-0350">Heme biosynthesis</keyword>
<keyword id="KW-0408">Iron</keyword>
<keyword id="KW-0472">Membrane</keyword>
<keyword id="KW-0479">Metal-binding</keyword>
<keyword id="KW-0560">Oxidoreductase</keyword>
<keyword id="KW-1185">Reference proteome</keyword>
<keyword id="KW-0812">Transmembrane</keyword>
<keyword id="KW-1133">Transmembrane helix</keyword>
<organism>
    <name type="scientific">Erythrobacter litoralis (strain HTCC2594)</name>
    <dbReference type="NCBI Taxonomy" id="314225"/>
    <lineage>
        <taxon>Bacteria</taxon>
        <taxon>Pseudomonadati</taxon>
        <taxon>Pseudomonadota</taxon>
        <taxon>Alphaproteobacteria</taxon>
        <taxon>Sphingomonadales</taxon>
        <taxon>Erythrobacteraceae</taxon>
        <taxon>Erythrobacter/Porphyrobacter group</taxon>
        <taxon>Erythrobacter</taxon>
    </lineage>
</organism>
<proteinExistence type="inferred from homology"/>
<gene>
    <name evidence="1" type="primary">ctaA</name>
    <name type="ordered locus">ELI_12850</name>
</gene>
<comment type="function">
    <text evidence="1">Catalyzes the conversion of heme O to heme A by two successive hydroxylations of the methyl group at C8. The first hydroxylation forms heme I, the second hydroxylation results in an unstable dihydroxymethyl group, which spontaneously dehydrates, resulting in the formyl group of heme A.</text>
</comment>
<comment type="catalytic activity">
    <reaction evidence="1">
        <text>Fe(II)-heme o + 2 A + H2O = Fe(II)-heme a + 2 AH2</text>
        <dbReference type="Rhea" id="RHEA:63388"/>
        <dbReference type="ChEBI" id="CHEBI:13193"/>
        <dbReference type="ChEBI" id="CHEBI:15377"/>
        <dbReference type="ChEBI" id="CHEBI:17499"/>
        <dbReference type="ChEBI" id="CHEBI:60530"/>
        <dbReference type="ChEBI" id="CHEBI:61715"/>
        <dbReference type="EC" id="1.17.99.9"/>
    </reaction>
    <physiologicalReaction direction="left-to-right" evidence="1">
        <dbReference type="Rhea" id="RHEA:63389"/>
    </physiologicalReaction>
</comment>
<comment type="cofactor">
    <cofactor evidence="1">
        <name>heme b</name>
        <dbReference type="ChEBI" id="CHEBI:60344"/>
    </cofactor>
</comment>
<comment type="pathway">
    <text evidence="1">Porphyrin-containing compound metabolism; heme A biosynthesis; heme A from heme O: step 1/1.</text>
</comment>
<comment type="subunit">
    <text evidence="1">Interacts with CtaB.</text>
</comment>
<comment type="subcellular location">
    <subcellularLocation>
        <location evidence="1">Cell membrane</location>
        <topology evidence="1">Multi-pass membrane protein</topology>
    </subcellularLocation>
</comment>
<comment type="similarity">
    <text evidence="1">Belongs to the COX15/CtaA family. Type 2 subfamily.</text>
</comment>
<evidence type="ECO:0000255" key="1">
    <source>
        <dbReference type="HAMAP-Rule" id="MF_01665"/>
    </source>
</evidence>
<reference key="1">
    <citation type="journal article" date="2009" name="J. Bacteriol.">
        <title>Complete genome sequence of Erythrobacter litoralis HTCC2594.</title>
        <authorList>
            <person name="Oh H.M."/>
            <person name="Giovannoni S.J."/>
            <person name="Ferriera S."/>
            <person name="Johnson J."/>
            <person name="Cho J.C."/>
        </authorList>
    </citation>
    <scope>NUCLEOTIDE SEQUENCE [LARGE SCALE GENOMIC DNA]</scope>
    <source>
        <strain>HTCC2594</strain>
    </source>
</reference>
<protein>
    <recommendedName>
        <fullName evidence="1">Heme A synthase</fullName>
        <shortName evidence="1">HAS</shortName>
        <ecNumber evidence="1">1.17.99.9</ecNumber>
    </recommendedName>
    <alternativeName>
        <fullName evidence="1">Cytochrome aa3-controlling protein</fullName>
    </alternativeName>
</protein>
<dbReference type="EC" id="1.17.99.9" evidence="1"/>
<dbReference type="EMBL" id="CP000157">
    <property type="protein sequence ID" value="ABC64662.1"/>
    <property type="molecule type" value="Genomic_DNA"/>
</dbReference>
<dbReference type="SMR" id="Q2N6M9"/>
<dbReference type="STRING" id="314225.ELI_12850"/>
<dbReference type="KEGG" id="eli:ELI_12850"/>
<dbReference type="eggNOG" id="COG1612">
    <property type="taxonomic scope" value="Bacteria"/>
</dbReference>
<dbReference type="HOGENOM" id="CLU_017627_0_0_5"/>
<dbReference type="OrthoDB" id="9793156at2"/>
<dbReference type="UniPathway" id="UPA00269">
    <property type="reaction ID" value="UER00713"/>
</dbReference>
<dbReference type="Proteomes" id="UP000008808">
    <property type="component" value="Chromosome"/>
</dbReference>
<dbReference type="GO" id="GO:0005886">
    <property type="term" value="C:plasma membrane"/>
    <property type="evidence" value="ECO:0007669"/>
    <property type="project" value="UniProtKB-SubCell"/>
</dbReference>
<dbReference type="GO" id="GO:0046872">
    <property type="term" value="F:metal ion binding"/>
    <property type="evidence" value="ECO:0007669"/>
    <property type="project" value="UniProtKB-KW"/>
</dbReference>
<dbReference type="GO" id="GO:0016653">
    <property type="term" value="F:oxidoreductase activity, acting on NAD(P)H, heme protein as acceptor"/>
    <property type="evidence" value="ECO:0007669"/>
    <property type="project" value="InterPro"/>
</dbReference>
<dbReference type="GO" id="GO:0006784">
    <property type="term" value="P:heme A biosynthetic process"/>
    <property type="evidence" value="ECO:0007669"/>
    <property type="project" value="UniProtKB-UniRule"/>
</dbReference>
<dbReference type="HAMAP" id="MF_01665">
    <property type="entry name" value="HemeA_synth_type2"/>
    <property type="match status" value="1"/>
</dbReference>
<dbReference type="InterPro" id="IPR003780">
    <property type="entry name" value="COX15/CtaA_fam"/>
</dbReference>
<dbReference type="InterPro" id="IPR023754">
    <property type="entry name" value="HemeA_Synthase_type2"/>
</dbReference>
<dbReference type="PANTHER" id="PTHR23289">
    <property type="entry name" value="CYTOCHROME C OXIDASE ASSEMBLY PROTEIN COX15"/>
    <property type="match status" value="1"/>
</dbReference>
<dbReference type="PANTHER" id="PTHR23289:SF2">
    <property type="entry name" value="CYTOCHROME C OXIDASE ASSEMBLY PROTEIN COX15 HOMOLOG"/>
    <property type="match status" value="1"/>
</dbReference>
<dbReference type="Pfam" id="PF02628">
    <property type="entry name" value="COX15-CtaA"/>
    <property type="match status" value="1"/>
</dbReference>
<accession>Q2N6M9</accession>